<evidence type="ECO:0000250" key="1"/>
<evidence type="ECO:0000255" key="2"/>
<evidence type="ECO:0000269" key="3">
    <source>
    </source>
</evidence>
<evidence type="ECO:0000305" key="4"/>
<feature type="signal peptide" evidence="2">
    <location>
        <begin position="1"/>
        <end position="23"/>
    </location>
</feature>
<feature type="chain" id="PRO_0000365513" description="Putative germin-like protein 8-1">
    <location>
        <begin position="24"/>
        <end position="219"/>
    </location>
</feature>
<feature type="domain" description="Cupin type-1" evidence="2">
    <location>
        <begin position="63"/>
        <end position="215"/>
    </location>
</feature>
<feature type="binding site" evidence="1">
    <location>
        <position position="112"/>
    </location>
    <ligand>
        <name>Mn(2+)</name>
        <dbReference type="ChEBI" id="CHEBI:29035"/>
    </ligand>
</feature>
<feature type="binding site" evidence="1">
    <location>
        <position position="114"/>
    </location>
    <ligand>
        <name>Mn(2+)</name>
        <dbReference type="ChEBI" id="CHEBI:29035"/>
    </ligand>
</feature>
<feature type="binding site" evidence="1">
    <location>
        <position position="119"/>
    </location>
    <ligand>
        <name>Mn(2+)</name>
        <dbReference type="ChEBI" id="CHEBI:29035"/>
    </ligand>
</feature>
<feature type="binding site" evidence="1">
    <location>
        <position position="160"/>
    </location>
    <ligand>
        <name>Mn(2+)</name>
        <dbReference type="ChEBI" id="CHEBI:29035"/>
    </ligand>
</feature>
<feature type="glycosylation site" description="N-linked (GlcNAc...) asparagine" evidence="2">
    <location>
        <position position="53"/>
    </location>
</feature>
<feature type="glycosylation site" description="N-linked (GlcNAc...) asparagine" evidence="2">
    <location>
        <position position="79"/>
    </location>
</feature>
<feature type="disulfide bond" evidence="1">
    <location>
        <begin position="33"/>
        <end position="48"/>
    </location>
</feature>
<sequence>MASFISFLLLAALIGMASWQAIAAEPSPLQDFCVADLNSAVRVNGFACKNPTNVSADDFFKAAMLDKPRDTAVNKVGSNITLINVMEIPGLNTLGISIVRVDYAPLGLNPPHTHPRATEIFTVLEGTLYVGFVTSNPDNKLFSKVLNKGDVFVFPKGLIHFQFNLDPHKPAIATSAISSQNPGIITIANAVFRSNPPISDDILAKAFQVDKKIIDLLQA</sequence>
<name>GL81_ORYSJ</name>
<proteinExistence type="inferred from homology"/>
<dbReference type="EMBL" id="AP004656">
    <property type="protein sequence ID" value="BAD03336.1"/>
    <property type="molecule type" value="Genomic_DNA"/>
</dbReference>
<dbReference type="EMBL" id="AP005531">
    <property type="protein sequence ID" value="BAD05765.1"/>
    <property type="molecule type" value="Genomic_DNA"/>
</dbReference>
<dbReference type="EMBL" id="AP008214">
    <property type="protein sequence ID" value="BAF23069.1"/>
    <property type="molecule type" value="Genomic_DNA"/>
</dbReference>
<dbReference type="EMBL" id="AP014964">
    <property type="protein sequence ID" value="BAT04147.1"/>
    <property type="molecule type" value="Genomic_DNA"/>
</dbReference>
<dbReference type="EMBL" id="CM000145">
    <property type="status" value="NOT_ANNOTATED_CDS"/>
    <property type="molecule type" value="Genomic_DNA"/>
</dbReference>
<dbReference type="RefSeq" id="XP_015649422.1">
    <property type="nucleotide sequence ID" value="XM_015793936.1"/>
</dbReference>
<dbReference type="SMR" id="Q6YZB2"/>
<dbReference type="FunCoup" id="Q6YZB2">
    <property type="interactions" value="40"/>
</dbReference>
<dbReference type="STRING" id="39947.Q6YZB2"/>
<dbReference type="PaxDb" id="39947-Q6YZB2"/>
<dbReference type="EnsemblPlants" id="Os08t0188900-01">
    <property type="protein sequence ID" value="Os08t0188900-01"/>
    <property type="gene ID" value="Os08g0188900"/>
</dbReference>
<dbReference type="GeneID" id="4344837"/>
<dbReference type="Gramene" id="Os08t0188900-01">
    <property type="protein sequence ID" value="Os08t0188900-01"/>
    <property type="gene ID" value="Os08g0188900"/>
</dbReference>
<dbReference type="KEGG" id="dosa:Os08g0188900"/>
<dbReference type="HOGENOM" id="CLU_015790_0_0_1"/>
<dbReference type="InParanoid" id="Q6YZB2"/>
<dbReference type="OMA" id="QFNIRET"/>
<dbReference type="OrthoDB" id="1850619at2759"/>
<dbReference type="Proteomes" id="UP000000763">
    <property type="component" value="Chromosome 8"/>
</dbReference>
<dbReference type="Proteomes" id="UP000007752">
    <property type="component" value="Chromosome 8"/>
</dbReference>
<dbReference type="Proteomes" id="UP000059680">
    <property type="component" value="Chromosome 8"/>
</dbReference>
<dbReference type="GO" id="GO:0048046">
    <property type="term" value="C:apoplast"/>
    <property type="evidence" value="ECO:0007669"/>
    <property type="project" value="UniProtKB-SubCell"/>
</dbReference>
<dbReference type="GO" id="GO:0030145">
    <property type="term" value="F:manganese ion binding"/>
    <property type="evidence" value="ECO:0007669"/>
    <property type="project" value="InterPro"/>
</dbReference>
<dbReference type="CDD" id="cd02241">
    <property type="entry name" value="cupin_OxOx"/>
    <property type="match status" value="1"/>
</dbReference>
<dbReference type="FunFam" id="2.60.120.10:FF:000005">
    <property type="entry name" value="Germin-like protein subfamily 1 member 8"/>
    <property type="match status" value="1"/>
</dbReference>
<dbReference type="Gene3D" id="2.60.120.10">
    <property type="entry name" value="Jelly Rolls"/>
    <property type="match status" value="1"/>
</dbReference>
<dbReference type="InterPro" id="IPR006045">
    <property type="entry name" value="Cupin_1"/>
</dbReference>
<dbReference type="InterPro" id="IPR001929">
    <property type="entry name" value="Germin"/>
</dbReference>
<dbReference type="InterPro" id="IPR019780">
    <property type="entry name" value="Germin_Mn-BS"/>
</dbReference>
<dbReference type="InterPro" id="IPR014710">
    <property type="entry name" value="RmlC-like_jellyroll"/>
</dbReference>
<dbReference type="InterPro" id="IPR011051">
    <property type="entry name" value="RmlC_Cupin_sf"/>
</dbReference>
<dbReference type="PANTHER" id="PTHR31238">
    <property type="entry name" value="GERMIN-LIKE PROTEIN SUBFAMILY 3 MEMBER 3"/>
    <property type="match status" value="1"/>
</dbReference>
<dbReference type="Pfam" id="PF00190">
    <property type="entry name" value="Cupin_1"/>
    <property type="match status" value="1"/>
</dbReference>
<dbReference type="PRINTS" id="PR00325">
    <property type="entry name" value="GERMIN"/>
</dbReference>
<dbReference type="SMART" id="SM00835">
    <property type="entry name" value="Cupin_1"/>
    <property type="match status" value="1"/>
</dbReference>
<dbReference type="SUPFAM" id="SSF51182">
    <property type="entry name" value="RmlC-like cupins"/>
    <property type="match status" value="1"/>
</dbReference>
<dbReference type="PROSITE" id="PS00725">
    <property type="entry name" value="GERMIN"/>
    <property type="match status" value="1"/>
</dbReference>
<protein>
    <recommendedName>
        <fullName>Putative germin-like protein 8-1</fullName>
    </recommendedName>
</protein>
<keyword id="KW-0052">Apoplast</keyword>
<keyword id="KW-1015">Disulfide bond</keyword>
<keyword id="KW-0325">Glycoprotein</keyword>
<keyword id="KW-0464">Manganese</keyword>
<keyword id="KW-0479">Metal-binding</keyword>
<keyword id="KW-1185">Reference proteome</keyword>
<keyword id="KW-0964">Secreted</keyword>
<keyword id="KW-0732">Signal</keyword>
<reference key="1">
    <citation type="journal article" date="2005" name="Nature">
        <title>The map-based sequence of the rice genome.</title>
        <authorList>
            <consortium name="International rice genome sequencing project (IRGSP)"/>
        </authorList>
    </citation>
    <scope>NUCLEOTIDE SEQUENCE [LARGE SCALE GENOMIC DNA]</scope>
    <source>
        <strain>cv. Nipponbare</strain>
    </source>
</reference>
<reference key="2">
    <citation type="journal article" date="2008" name="Nucleic Acids Res.">
        <title>The rice annotation project database (RAP-DB): 2008 update.</title>
        <authorList>
            <consortium name="The rice annotation project (RAP)"/>
        </authorList>
    </citation>
    <scope>GENOME REANNOTATION</scope>
    <source>
        <strain>cv. Nipponbare</strain>
    </source>
</reference>
<reference key="3">
    <citation type="journal article" date="2013" name="Rice">
        <title>Improvement of the Oryza sativa Nipponbare reference genome using next generation sequence and optical map data.</title>
        <authorList>
            <person name="Kawahara Y."/>
            <person name="de la Bastide M."/>
            <person name="Hamilton J.P."/>
            <person name="Kanamori H."/>
            <person name="McCombie W.R."/>
            <person name="Ouyang S."/>
            <person name="Schwartz D.C."/>
            <person name="Tanaka T."/>
            <person name="Wu J."/>
            <person name="Zhou S."/>
            <person name="Childs K.L."/>
            <person name="Davidson R.M."/>
            <person name="Lin H."/>
            <person name="Quesada-Ocampo L."/>
            <person name="Vaillancourt B."/>
            <person name="Sakai H."/>
            <person name="Lee S.S."/>
            <person name="Kim J."/>
            <person name="Numa H."/>
            <person name="Itoh T."/>
            <person name="Buell C.R."/>
            <person name="Matsumoto T."/>
        </authorList>
    </citation>
    <scope>GENOME REANNOTATION</scope>
    <source>
        <strain>cv. Nipponbare</strain>
    </source>
</reference>
<reference key="4">
    <citation type="journal article" date="2005" name="PLoS Biol.">
        <title>The genomes of Oryza sativa: a history of duplications.</title>
        <authorList>
            <person name="Yu J."/>
            <person name="Wang J."/>
            <person name="Lin W."/>
            <person name="Li S."/>
            <person name="Li H."/>
            <person name="Zhou J."/>
            <person name="Ni P."/>
            <person name="Dong W."/>
            <person name="Hu S."/>
            <person name="Zeng C."/>
            <person name="Zhang J."/>
            <person name="Zhang Y."/>
            <person name="Li R."/>
            <person name="Xu Z."/>
            <person name="Li S."/>
            <person name="Li X."/>
            <person name="Zheng H."/>
            <person name="Cong L."/>
            <person name="Lin L."/>
            <person name="Yin J."/>
            <person name="Geng J."/>
            <person name="Li G."/>
            <person name="Shi J."/>
            <person name="Liu J."/>
            <person name="Lv H."/>
            <person name="Li J."/>
            <person name="Wang J."/>
            <person name="Deng Y."/>
            <person name="Ran L."/>
            <person name="Shi X."/>
            <person name="Wang X."/>
            <person name="Wu Q."/>
            <person name="Li C."/>
            <person name="Ren X."/>
            <person name="Wang J."/>
            <person name="Wang X."/>
            <person name="Li D."/>
            <person name="Liu D."/>
            <person name="Zhang X."/>
            <person name="Ji Z."/>
            <person name="Zhao W."/>
            <person name="Sun Y."/>
            <person name="Zhang Z."/>
            <person name="Bao J."/>
            <person name="Han Y."/>
            <person name="Dong L."/>
            <person name="Ji J."/>
            <person name="Chen P."/>
            <person name="Wu S."/>
            <person name="Liu J."/>
            <person name="Xiao Y."/>
            <person name="Bu D."/>
            <person name="Tan J."/>
            <person name="Yang L."/>
            <person name="Ye C."/>
            <person name="Zhang J."/>
            <person name="Xu J."/>
            <person name="Zhou Y."/>
            <person name="Yu Y."/>
            <person name="Zhang B."/>
            <person name="Zhuang S."/>
            <person name="Wei H."/>
            <person name="Liu B."/>
            <person name="Lei M."/>
            <person name="Yu H."/>
            <person name="Li Y."/>
            <person name="Xu H."/>
            <person name="Wei S."/>
            <person name="He X."/>
            <person name="Fang L."/>
            <person name="Zhang Z."/>
            <person name="Zhang Y."/>
            <person name="Huang X."/>
            <person name="Su Z."/>
            <person name="Tong W."/>
            <person name="Li J."/>
            <person name="Tong Z."/>
            <person name="Li S."/>
            <person name="Ye J."/>
            <person name="Wang L."/>
            <person name="Fang L."/>
            <person name="Lei T."/>
            <person name="Chen C.-S."/>
            <person name="Chen H.-C."/>
            <person name="Xu Z."/>
            <person name="Li H."/>
            <person name="Huang H."/>
            <person name="Zhang F."/>
            <person name="Xu H."/>
            <person name="Li N."/>
            <person name="Zhao C."/>
            <person name="Li S."/>
            <person name="Dong L."/>
            <person name="Huang Y."/>
            <person name="Li L."/>
            <person name="Xi Y."/>
            <person name="Qi Q."/>
            <person name="Li W."/>
            <person name="Zhang B."/>
            <person name="Hu W."/>
            <person name="Zhang Y."/>
            <person name="Tian X."/>
            <person name="Jiao Y."/>
            <person name="Liang X."/>
            <person name="Jin J."/>
            <person name="Gao L."/>
            <person name="Zheng W."/>
            <person name="Hao B."/>
            <person name="Liu S.-M."/>
            <person name="Wang W."/>
            <person name="Yuan L."/>
            <person name="Cao M."/>
            <person name="McDermott J."/>
            <person name="Samudrala R."/>
            <person name="Wang J."/>
            <person name="Wong G.K.-S."/>
            <person name="Yang H."/>
        </authorList>
    </citation>
    <scope>NUCLEOTIDE SEQUENCE [LARGE SCALE GENOMIC DNA]</scope>
    <source>
        <strain>cv. Nipponbare</strain>
    </source>
</reference>
<reference key="5">
    <citation type="journal article" date="2009" name="Plant Physiol.">
        <title>A germin-like protein gene family functions as a complex quantitative trait locus conferring broad-spectrum disease resistance in rice.</title>
        <authorList>
            <person name="Manosalva P.M."/>
            <person name="Davidson R.M."/>
            <person name="Liu B."/>
            <person name="Zhu X."/>
            <person name="Hulbert S.H."/>
            <person name="Leung H."/>
            <person name="Leach J.E."/>
        </authorList>
    </citation>
    <scope>FUNCTION</scope>
</reference>
<gene>
    <name type="ordered locus">Os08g0188900</name>
    <name type="ordered locus">LOC_Os08g08920</name>
    <name type="ORF">B1099H05.17</name>
    <name type="ORF">OsJ_025234</name>
    <name type="ORF">P0020B10.41</name>
</gene>
<comment type="function">
    <text evidence="3">Plays a role in broad-spectrum disease resistance. Probably has no oxalate oxidase activity even if the active site is conserved.</text>
</comment>
<comment type="subunit">
    <text evidence="1">Oligomer (believed to be a pentamer but probably hexamer).</text>
</comment>
<comment type="subcellular location">
    <subcellularLocation>
        <location evidence="1">Secreted</location>
        <location evidence="1">Extracellular space</location>
        <location evidence="1">Apoplast</location>
    </subcellularLocation>
</comment>
<comment type="miscellaneous">
    <text>Member of the 12 germin-like protein gene cluster located on chromosome 8 in the major-effect quantitative trait loci (QTL) for fungal blast resistance. Partial suppression of the 12 germin-like protein genes increases susceptibility to the fungal pathogens causing rice blast and sheath blight diseases.</text>
</comment>
<comment type="similarity">
    <text evidence="4">Belongs to the germin family.</text>
</comment>
<organism>
    <name type="scientific">Oryza sativa subsp. japonica</name>
    <name type="common">Rice</name>
    <dbReference type="NCBI Taxonomy" id="39947"/>
    <lineage>
        <taxon>Eukaryota</taxon>
        <taxon>Viridiplantae</taxon>
        <taxon>Streptophyta</taxon>
        <taxon>Embryophyta</taxon>
        <taxon>Tracheophyta</taxon>
        <taxon>Spermatophyta</taxon>
        <taxon>Magnoliopsida</taxon>
        <taxon>Liliopsida</taxon>
        <taxon>Poales</taxon>
        <taxon>Poaceae</taxon>
        <taxon>BOP clade</taxon>
        <taxon>Oryzoideae</taxon>
        <taxon>Oryzeae</taxon>
        <taxon>Oryzinae</taxon>
        <taxon>Oryza</taxon>
        <taxon>Oryza sativa</taxon>
    </lineage>
</organism>
<accession>Q6YZB2</accession>
<accession>A0A0P0XDD8</accession>